<reference key="1">
    <citation type="journal article" date="2010" name="Development">
        <title>Dysregulation of cell-to-cell connectivity and stomatal patterning by loss-of-function mutation in Arabidopsis CHORUS (GLUCAN SYNTHASE-LIKE 8).</title>
        <authorList>
            <person name="Guseman J.M."/>
            <person name="Lee J.S."/>
            <person name="Bogenschutz N.L."/>
            <person name="Peterson K.M."/>
            <person name="Virata R.E."/>
            <person name="Xie B."/>
            <person name="Kanaoka M.M."/>
            <person name="Hong Z."/>
            <person name="Torii K.U."/>
        </authorList>
    </citation>
    <scope>NUCLEOTIDE SEQUENCE [MRNA]</scope>
    <scope>FUNCTION</scope>
    <scope>DISRUPTION PHENOTYPE</scope>
    <source>
        <strain>cv. Columbia</strain>
    </source>
</reference>
<reference key="2">
    <citation type="journal article" date="1999" name="Nature">
        <title>Sequence and analysis of chromosome 2 of the plant Arabidopsis thaliana.</title>
        <authorList>
            <person name="Lin X."/>
            <person name="Kaul S."/>
            <person name="Rounsley S.D."/>
            <person name="Shea T.P."/>
            <person name="Benito M.-I."/>
            <person name="Town C.D."/>
            <person name="Fujii C.Y."/>
            <person name="Mason T.M."/>
            <person name="Bowman C.L."/>
            <person name="Barnstead M.E."/>
            <person name="Feldblyum T.V."/>
            <person name="Buell C.R."/>
            <person name="Ketchum K.A."/>
            <person name="Lee J.J."/>
            <person name="Ronning C.M."/>
            <person name="Koo H.L."/>
            <person name="Moffat K.S."/>
            <person name="Cronin L.A."/>
            <person name="Shen M."/>
            <person name="Pai G."/>
            <person name="Van Aken S."/>
            <person name="Umayam L."/>
            <person name="Tallon L.J."/>
            <person name="Gill J.E."/>
            <person name="Adams M.D."/>
            <person name="Carrera A.J."/>
            <person name="Creasy T.H."/>
            <person name="Goodman H.M."/>
            <person name="Somerville C.R."/>
            <person name="Copenhaver G.P."/>
            <person name="Preuss D."/>
            <person name="Nierman W.C."/>
            <person name="White O."/>
            <person name="Eisen J.A."/>
            <person name="Salzberg S.L."/>
            <person name="Fraser C.M."/>
            <person name="Venter J.C."/>
        </authorList>
    </citation>
    <scope>NUCLEOTIDE SEQUENCE [LARGE SCALE GENOMIC DNA]</scope>
    <source>
        <strain>cv. Columbia</strain>
    </source>
</reference>
<reference key="3">
    <citation type="journal article" date="2017" name="Plant J.">
        <title>Araport11: a complete reannotation of the Arabidopsis thaliana reference genome.</title>
        <authorList>
            <person name="Cheng C.Y."/>
            <person name="Krishnakumar V."/>
            <person name="Chan A.P."/>
            <person name="Thibaud-Nissen F."/>
            <person name="Schobel S."/>
            <person name="Town C.D."/>
        </authorList>
    </citation>
    <scope>GENOME REANNOTATION</scope>
    <source>
        <strain>cv. Columbia</strain>
    </source>
</reference>
<reference key="4">
    <citation type="submission" date="2006-07" db="EMBL/GenBank/DDBJ databases">
        <title>Large-scale analysis of RIKEN Arabidopsis full-length (RAFL) cDNAs.</title>
        <authorList>
            <person name="Totoki Y."/>
            <person name="Seki M."/>
            <person name="Ishida J."/>
            <person name="Nakajima M."/>
            <person name="Enju A."/>
            <person name="Kamiya A."/>
            <person name="Narusaka M."/>
            <person name="Shin-i T."/>
            <person name="Nakagawa M."/>
            <person name="Sakamoto N."/>
            <person name="Oishi K."/>
            <person name="Kohara Y."/>
            <person name="Kobayashi M."/>
            <person name="Toyoda A."/>
            <person name="Sakaki Y."/>
            <person name="Sakurai T."/>
            <person name="Iida K."/>
            <person name="Akiyama K."/>
            <person name="Satou M."/>
            <person name="Toyoda T."/>
            <person name="Konagaya A."/>
            <person name="Carninci P."/>
            <person name="Kawai J."/>
            <person name="Hayashizaki Y."/>
            <person name="Shinozaki K."/>
        </authorList>
    </citation>
    <scope>NUCLEOTIDE SEQUENCE [LARGE SCALE MRNA] OF 1830-1904</scope>
    <source>
        <strain>cv. Columbia</strain>
    </source>
</reference>
<reference key="5">
    <citation type="journal article" date="2001" name="Plant Cell">
        <title>A cell plate-specific callose synthase and its interaction with phragmoplastin.</title>
        <authorList>
            <person name="Hong Z."/>
            <person name="Delauney A.J."/>
            <person name="Verma D.P.S."/>
        </authorList>
    </citation>
    <scope>GENE FAMILY</scope>
    <scope>NOMENCLATURE</scope>
</reference>
<reference key="6">
    <citation type="journal article" date="2005" name="Plant Mol. Biol.">
        <title>Two callose synthases, GSL1 and GSL5, play an essential and redundant role in plant and pollen development and in fertility.</title>
        <authorList>
            <person name="Enns L.C."/>
            <person name="Kanaoka M.M."/>
            <person name="Torii K.U."/>
            <person name="Comai L."/>
            <person name="Okada K."/>
            <person name="Cleland R.E."/>
        </authorList>
    </citation>
    <scope>NOMENCLATURE</scope>
</reference>
<reference key="7">
    <citation type="journal article" date="2008" name="Plant J.">
        <title>Dual function of Arabidopsis glucan synthase-like genes GSL8 and GSL10 in male gametophyte development and plant growth.</title>
        <authorList>
            <person name="Toeller A."/>
            <person name="Brownfield L."/>
            <person name="Neu C."/>
            <person name="Twell D."/>
            <person name="Schulze-Lefert P."/>
        </authorList>
    </citation>
    <scope>FUNCTION</scope>
    <scope>DEVELOPMENTAL STAGE</scope>
    <scope>DISRUPTION PHENOTYPE</scope>
</reference>
<sequence length="1904" mass="218378">MARVYSNWDRLVRATLRREQLRNTGQGHERVSSGLAGAVPPSLGRATNIDAILQAADEIQSEDPSVARILCEQAYSMAQNLDPNSDGRGVLQFKTGLMSVIKQKLAKRDGASIDRDRDIERLWEFYKLYKRRHRVDDIQKEEQKWRESGTTFSSNVGEILKMRKVFATLRALIEVLEVLSRDADPNGVGRSIRDELGRIKKADATLSAELTPYNIVPLEAQSMTNAIGVFPEVRGAVQAIRYTEHFPRLPVDFEISGQRDADMFDLLEYIFGFQRDNVRNQREHLVLTLSNAQSQLSIPGQNDPKIDENAVNEVFLKVLDNYIKWCKYLRIRVVYNKLEAIDRDRKLFLVSLYFLIWGEAANVRFLPECICYIFHNMAKELDAKLDHGEAVRADSCLTGTDTGSVSFLERIICPIYETISAETVRNNGGKAAHSEWRNYDDFNEYFWTPACFELSWPMKTESRFLSKPKGRKRTAKSSFVEHRTYLHLFRSFIRLWIFMFIMFQSLTIIAFRNEHLNIETFKILLSAGPTYAIMNFIECLLDVVLMYGAYSMARGMAISRLVIRFLWWGLGSAFVVYYYVKVLDERNKPNQNEFFFHLYILVLGCYAAVRLIFGLLVKLPACHALSEMSDQSFFQFFKWIYQERYFVGRGLFENLSDYCRYVAFWLVVLASKFTFAYFLQIKPLVKPTNTIIHLPPFQYSWHDIVSKSNDHALTIVSLWAPVLAIYLMDIHIWYTLLSAIIGGVMGAKARLGEIRTIEMVHKRFESFPEAFAQNLVSPVVKRVPLGQHASQDGQDMNKAYAAMFSPFWNEIIKSLREEDYLSNREMDLLSIPSNTGSLRLVQWPLFLLCSKILVAIDLAMECKETQEVLWRQICDDEYMAYAVQECYYSVEKILNSMVNDEGRRWVERIFLEISNSIEQGSLAITLNLKKLQLVVSRFTALTGLLIRNETPDLAKGAAKAMFDFYEVVTHDLLSHDLREQLDTWNILARARNEGRLFSRIAWPRDPEIIEQVKRLHLLLTVKDAAANVPKNLEARRRLEFFTNSLFMDMPQARPVAEMVPFSVFTPYYSETVLYSSSELRSENEDGISILFYLQKIFPDEWENFLERIGRSESTGDADLQASSTDALELRFWVSYRGQTLARTVRGMMYYRRALMLQSFLERRGLGVDDASLTNMPRGFESSIEARAQADLKFTYVVSCQIYGQQKQQKKPEATDIGLLLQRYEALRVAFIHSEDVGNGDGGSGGKKEFYSKLVKADIHGKDEEIYSIKLPGDPKLGEGKPENQNHAIVFTRGEAIQTIDMNQDNYLEEAIKMRNLLEEFHGKHGIRRPTILGVREHVFTGSVSSLAWFMSNQETSFVTLGQRVLAYPLKVRMHYGHPDVFDRIFHITRGGISKASRVINISEDIYAGFNSTLRQGNITHHEYIQVGKGRDVGLNQIALFEGKVAGGNGEQVLSRDVYRIGQLFDFFRMMSFYFTTVGFYVCTMMTVLTVYVFLYGRVYLAFSGADRAISRVAKLSGNTALDAALNAQFLVQIGIFTAVPMVMGFILELGLLKAIFSFITMQFQLCSVFFTFSLGTRTHYFGRTILHGGAKYRATGRGFVVQHIKFADNYRLYSRSHFVKAFEVALLLIIYIAYGYTDGGASSFVLLTISSWFLVISWLFAPYIFNPSGFEWQKTVEDFEDWVSWLMYKGGVGVKGELSWESWWEEEQAHIQTLRGRILETILSLRFFMFQYGIVYKLDLTRKNTSLALYGYSWVVLVVIVFLFKLFWYSPRKSSNILLALRFLQGVASITFIALIVVAIAMTDLSIPDMFACVLGFIPTGWALLSLAITWKQVLRVLGLWETVREFGRIYDAAMGMLIFSPIALLSWFPFISTFQSRLLFNQAFSRGLEISIILAGNRANVET</sequence>
<evidence type="ECO:0000255" key="1"/>
<evidence type="ECO:0000269" key="2">
    <source>
    </source>
</evidence>
<evidence type="ECO:0000269" key="3">
    <source>
    </source>
</evidence>
<evidence type="ECO:0000305" key="4"/>
<gene>
    <name type="primary">CALS10</name>
    <name type="synonym">GSL8</name>
    <name type="ordered locus">At2g36850</name>
    <name type="ORF">T1J8.3</name>
</gene>
<feature type="chain" id="PRO_0000334582" description="Callose synthase 10">
    <location>
        <begin position="1"/>
        <end position="1904"/>
    </location>
</feature>
<feature type="transmembrane region" description="Helical" evidence="1">
    <location>
        <begin position="491"/>
        <end position="511"/>
    </location>
</feature>
<feature type="transmembrane region" description="Helical" evidence="1">
    <location>
        <begin position="532"/>
        <end position="552"/>
    </location>
</feature>
<feature type="transmembrane region" description="Helical" evidence="1">
    <location>
        <begin position="562"/>
        <end position="582"/>
    </location>
</feature>
<feature type="transmembrane region" description="Helical" evidence="1">
    <location>
        <begin position="594"/>
        <end position="614"/>
    </location>
</feature>
<feature type="transmembrane region" description="Helical" evidence="1">
    <location>
        <begin position="661"/>
        <end position="681"/>
    </location>
</feature>
<feature type="transmembrane region" description="Helical" evidence="1">
    <location>
        <begin position="722"/>
        <end position="742"/>
    </location>
</feature>
<feature type="transmembrane region" description="Helical" evidence="1">
    <location>
        <begin position="1474"/>
        <end position="1494"/>
    </location>
</feature>
<feature type="transmembrane region" description="Helical" evidence="1">
    <location>
        <begin position="1529"/>
        <end position="1549"/>
    </location>
</feature>
<feature type="transmembrane region" description="Helical" evidence="1">
    <location>
        <begin position="1554"/>
        <end position="1574"/>
    </location>
</feature>
<feature type="transmembrane region" description="Helical" evidence="1">
    <location>
        <begin position="1621"/>
        <end position="1641"/>
    </location>
</feature>
<feature type="transmembrane region" description="Helical" evidence="1">
    <location>
        <begin position="1644"/>
        <end position="1664"/>
    </location>
</feature>
<feature type="transmembrane region" description="Helical" evidence="1">
    <location>
        <begin position="1747"/>
        <end position="1767"/>
    </location>
</feature>
<feature type="transmembrane region" description="Helical" evidence="1">
    <location>
        <begin position="1783"/>
        <end position="1803"/>
    </location>
</feature>
<feature type="transmembrane region" description="Helical" evidence="1">
    <location>
        <begin position="1811"/>
        <end position="1831"/>
    </location>
</feature>
<feature type="transmembrane region" description="Helical" evidence="1">
    <location>
        <begin position="1853"/>
        <end position="1873"/>
    </location>
</feature>
<feature type="repeat" description="HAT 1">
    <location>
        <begin position="100"/>
        <end position="132"/>
    </location>
</feature>
<feature type="repeat" description="LRR 1">
    <location>
        <begin position="678"/>
        <end position="701"/>
    </location>
</feature>
<feature type="repeat" description="LRR 2">
    <location>
        <begin position="751"/>
        <end position="774"/>
    </location>
</feature>
<feature type="repeat" description="LRR 3">
    <location>
        <begin position="925"/>
        <end position="948"/>
    </location>
</feature>
<feature type="repeat" description="HAT 2">
    <location>
        <begin position="1074"/>
        <end position="1107"/>
    </location>
</feature>
<feature type="repeat" description="LRR 4">
    <location>
        <begin position="1159"/>
        <end position="1181"/>
    </location>
</feature>
<feature type="repeat" description="HAT 3">
    <location>
        <begin position="1659"/>
        <end position="1691"/>
    </location>
</feature>
<feature type="sequence conflict" description="In Ref. 4; BAF01442." evidence="4" ref="4">
    <original>TW</original>
    <variation>YG</variation>
    <location>
        <begin position="1830"/>
        <end position="1831"/>
    </location>
</feature>
<accession>Q9SJM0</accession>
<accession>C8C9X2</accession>
<accession>Q0WN58</accession>
<keyword id="KW-1003">Cell membrane</keyword>
<keyword id="KW-0133">Cell shape</keyword>
<keyword id="KW-0961">Cell wall biogenesis/degradation</keyword>
<keyword id="KW-0328">Glycosyltransferase</keyword>
<keyword id="KW-0433">Leucine-rich repeat</keyword>
<keyword id="KW-0472">Membrane</keyword>
<keyword id="KW-1185">Reference proteome</keyword>
<keyword id="KW-0677">Repeat</keyword>
<keyword id="KW-0808">Transferase</keyword>
<keyword id="KW-0812">Transmembrane</keyword>
<keyword id="KW-1133">Transmembrane helix</keyword>
<name>CALSA_ARATH</name>
<organism>
    <name type="scientific">Arabidopsis thaliana</name>
    <name type="common">Mouse-ear cress</name>
    <dbReference type="NCBI Taxonomy" id="3702"/>
    <lineage>
        <taxon>Eukaryota</taxon>
        <taxon>Viridiplantae</taxon>
        <taxon>Streptophyta</taxon>
        <taxon>Embryophyta</taxon>
        <taxon>Tracheophyta</taxon>
        <taxon>Spermatophyta</taxon>
        <taxon>Magnoliopsida</taxon>
        <taxon>eudicotyledons</taxon>
        <taxon>Gunneridae</taxon>
        <taxon>Pentapetalae</taxon>
        <taxon>rosids</taxon>
        <taxon>malvids</taxon>
        <taxon>Brassicales</taxon>
        <taxon>Brassicaceae</taxon>
        <taxon>Camelineae</taxon>
        <taxon>Arabidopsis</taxon>
    </lineage>
</organism>
<comment type="function">
    <text evidence="2 3">Involved in sporophytic and gametophytic development. Required for normal plant development and for the proper accumulation of callose at cell plates, cll walls and plasmodesmata. During pollen formation, required for the entry of microspores into mitosis. During plant growth and development, callose is found as a transitory component of the cell plate in dividing cells, is a major component of pollen mother cell walls and pollen tubes, and is found as a structural component of plasmodesmatal canals. Required for proper cell division and tissue patterning throughout plant organs, including stomatal patterning.</text>
</comment>
<comment type="catalytic activity">
    <reaction>
        <text>[(1-&gt;3)-beta-D-glucosyl](n) + UDP-alpha-D-glucose = [(1-&gt;3)-beta-D-glucosyl](n+1) + UDP + H(+)</text>
        <dbReference type="Rhea" id="RHEA:21476"/>
        <dbReference type="Rhea" id="RHEA-COMP:11146"/>
        <dbReference type="Rhea" id="RHEA-COMP:14303"/>
        <dbReference type="ChEBI" id="CHEBI:15378"/>
        <dbReference type="ChEBI" id="CHEBI:37671"/>
        <dbReference type="ChEBI" id="CHEBI:58223"/>
        <dbReference type="ChEBI" id="CHEBI:58885"/>
        <dbReference type="EC" id="2.4.1.34"/>
    </reaction>
</comment>
<comment type="subcellular location">
    <subcellularLocation>
        <location evidence="4">Cell membrane</location>
        <topology evidence="4">Multi-pass membrane protein</topology>
    </subcellularLocation>
</comment>
<comment type="developmental stage">
    <text evidence="2">Expressed throughout pollen development with a at mature pollen stage.</text>
</comment>
<comment type="disruption phenotype">
    <text evidence="2 3">Seedling lethality with severe dwarfism. Plants develop collapsed and inviable pollen grains.</text>
</comment>
<comment type="similarity">
    <text evidence="4">Belongs to the glycosyltransferase 48 family.</text>
</comment>
<comment type="sequence caution" evidence="4">
    <conflict type="erroneous gene model prediction">
        <sequence resource="EMBL-CDS" id="AAD31571"/>
    </conflict>
</comment>
<dbReference type="EC" id="2.4.1.34"/>
<dbReference type="EMBL" id="GQ373182">
    <property type="protein sequence ID" value="ACV04899.1"/>
    <property type="molecule type" value="mRNA"/>
</dbReference>
<dbReference type="EMBL" id="AC006922">
    <property type="protein sequence ID" value="AAD31571.1"/>
    <property type="status" value="ALT_SEQ"/>
    <property type="molecule type" value="Genomic_DNA"/>
</dbReference>
<dbReference type="EMBL" id="CP002685">
    <property type="protein sequence ID" value="AEC09306.1"/>
    <property type="molecule type" value="Genomic_DNA"/>
</dbReference>
<dbReference type="EMBL" id="AK229594">
    <property type="protein sequence ID" value="BAF01442.1"/>
    <property type="molecule type" value="mRNA"/>
</dbReference>
<dbReference type="PIR" id="E84785">
    <property type="entry name" value="E84785"/>
</dbReference>
<dbReference type="RefSeq" id="NP_850271.5">
    <property type="nucleotide sequence ID" value="NM_179940.6"/>
</dbReference>
<dbReference type="BioGRID" id="3602">
    <property type="interactions" value="2"/>
</dbReference>
<dbReference type="FunCoup" id="Q9SJM0">
    <property type="interactions" value="1734"/>
</dbReference>
<dbReference type="STRING" id="3702.Q9SJM0"/>
<dbReference type="CAZy" id="GT48">
    <property type="family name" value="Glycosyltransferase Family 48"/>
</dbReference>
<dbReference type="iPTMnet" id="Q9SJM0"/>
<dbReference type="SwissPalm" id="Q9SJM0"/>
<dbReference type="PaxDb" id="3702-AT2G36850.1"/>
<dbReference type="ProteomicsDB" id="240543"/>
<dbReference type="EnsemblPlants" id="AT2G36850.1">
    <property type="protein sequence ID" value="AT2G36850.1"/>
    <property type="gene ID" value="AT2G36850"/>
</dbReference>
<dbReference type="GeneID" id="818258"/>
<dbReference type="Gramene" id="AT2G36850.1">
    <property type="protein sequence ID" value="AT2G36850.1"/>
    <property type="gene ID" value="AT2G36850"/>
</dbReference>
<dbReference type="KEGG" id="ath:AT2G36850"/>
<dbReference type="Araport" id="AT2G36850"/>
<dbReference type="TAIR" id="AT2G36850">
    <property type="gene designation" value="GSL8"/>
</dbReference>
<dbReference type="eggNOG" id="KOG0916">
    <property type="taxonomic scope" value="Eukaryota"/>
</dbReference>
<dbReference type="HOGENOM" id="CLU_000742_1_1_1"/>
<dbReference type="InParanoid" id="Q9SJM0"/>
<dbReference type="OMA" id="FHIGTKW"/>
<dbReference type="OrthoDB" id="1880850at2759"/>
<dbReference type="BioCyc" id="ARA:AT2G36850-MONOMER"/>
<dbReference type="PRO" id="PR:Q9SJM0"/>
<dbReference type="Proteomes" id="UP000006548">
    <property type="component" value="Chromosome 2"/>
</dbReference>
<dbReference type="ExpressionAtlas" id="Q9SJM0">
    <property type="expression patterns" value="baseline and differential"/>
</dbReference>
<dbReference type="GO" id="GO:0000148">
    <property type="term" value="C:1,3-beta-D-glucan synthase complex"/>
    <property type="evidence" value="ECO:0007669"/>
    <property type="project" value="InterPro"/>
</dbReference>
<dbReference type="GO" id="GO:0005794">
    <property type="term" value="C:Golgi apparatus"/>
    <property type="evidence" value="ECO:0007005"/>
    <property type="project" value="TAIR"/>
</dbReference>
<dbReference type="GO" id="GO:0005886">
    <property type="term" value="C:plasma membrane"/>
    <property type="evidence" value="ECO:0007005"/>
    <property type="project" value="TAIR"/>
</dbReference>
<dbReference type="GO" id="GO:0009506">
    <property type="term" value="C:plasmodesma"/>
    <property type="evidence" value="ECO:0007005"/>
    <property type="project" value="TAIR"/>
</dbReference>
<dbReference type="GO" id="GO:0003843">
    <property type="term" value="F:1,3-beta-D-glucan synthase activity"/>
    <property type="evidence" value="ECO:0007669"/>
    <property type="project" value="UniProtKB-EC"/>
</dbReference>
<dbReference type="GO" id="GO:0006075">
    <property type="term" value="P:(1-&gt;3)-beta-D-glucan biosynthetic process"/>
    <property type="evidence" value="ECO:0007669"/>
    <property type="project" value="InterPro"/>
</dbReference>
<dbReference type="GO" id="GO:0071555">
    <property type="term" value="P:cell wall organization"/>
    <property type="evidence" value="ECO:0007669"/>
    <property type="project" value="UniProtKB-KW"/>
</dbReference>
<dbReference type="GO" id="GO:0048589">
    <property type="term" value="P:developmental growth"/>
    <property type="evidence" value="ECO:0000315"/>
    <property type="project" value="TAIR"/>
</dbReference>
<dbReference type="GO" id="GO:0009556">
    <property type="term" value="P:microsporogenesis"/>
    <property type="evidence" value="ECO:0000315"/>
    <property type="project" value="TAIR"/>
</dbReference>
<dbReference type="GO" id="GO:0009555">
    <property type="term" value="P:pollen development"/>
    <property type="evidence" value="ECO:0000315"/>
    <property type="project" value="TAIR"/>
</dbReference>
<dbReference type="GO" id="GO:0008360">
    <property type="term" value="P:regulation of cell shape"/>
    <property type="evidence" value="ECO:0007669"/>
    <property type="project" value="UniProtKB-KW"/>
</dbReference>
<dbReference type="InterPro" id="IPR026899">
    <property type="entry name" value="FKS1-like_dom1"/>
</dbReference>
<dbReference type="InterPro" id="IPR003440">
    <property type="entry name" value="Glyco_trans_48_dom"/>
</dbReference>
<dbReference type="PANTHER" id="PTHR12741:SF67">
    <property type="entry name" value="CALLOSE SYNTHASE 10"/>
    <property type="match status" value="1"/>
</dbReference>
<dbReference type="PANTHER" id="PTHR12741">
    <property type="entry name" value="LYST-INTERACTING PROTEIN LIP5 DOPAMINE RESPONSIVE PROTEIN DRG-1"/>
    <property type="match status" value="1"/>
</dbReference>
<dbReference type="Pfam" id="PF14288">
    <property type="entry name" value="FKS1_dom1"/>
    <property type="match status" value="1"/>
</dbReference>
<dbReference type="Pfam" id="PF02364">
    <property type="entry name" value="Glucan_synthase"/>
    <property type="match status" value="1"/>
</dbReference>
<dbReference type="SMART" id="SM01205">
    <property type="entry name" value="FKS1_dom1"/>
    <property type="match status" value="1"/>
</dbReference>
<proteinExistence type="evidence at transcript level"/>
<protein>
    <recommendedName>
        <fullName>Callose synthase 10</fullName>
        <ecNumber>2.4.1.34</ecNumber>
    </recommendedName>
    <alternativeName>
        <fullName>1,3-beta-glucan synthase</fullName>
    </alternativeName>
    <alternativeName>
        <fullName>Protein CHORUS</fullName>
    </alternativeName>
    <alternativeName>
        <fullName>Protein GLUCAN SYNTHASE-LIKE 8</fullName>
    </alternativeName>
</protein>